<reference key="1">
    <citation type="journal article" date="2009" name="PLoS Genet.">
        <title>Organised genome dynamics in the Escherichia coli species results in highly diverse adaptive paths.</title>
        <authorList>
            <person name="Touchon M."/>
            <person name="Hoede C."/>
            <person name="Tenaillon O."/>
            <person name="Barbe V."/>
            <person name="Baeriswyl S."/>
            <person name="Bidet P."/>
            <person name="Bingen E."/>
            <person name="Bonacorsi S."/>
            <person name="Bouchier C."/>
            <person name="Bouvet O."/>
            <person name="Calteau A."/>
            <person name="Chiapello H."/>
            <person name="Clermont O."/>
            <person name="Cruveiller S."/>
            <person name="Danchin A."/>
            <person name="Diard M."/>
            <person name="Dossat C."/>
            <person name="Karoui M.E."/>
            <person name="Frapy E."/>
            <person name="Garry L."/>
            <person name="Ghigo J.M."/>
            <person name="Gilles A.M."/>
            <person name="Johnson J."/>
            <person name="Le Bouguenec C."/>
            <person name="Lescat M."/>
            <person name="Mangenot S."/>
            <person name="Martinez-Jehanne V."/>
            <person name="Matic I."/>
            <person name="Nassif X."/>
            <person name="Oztas S."/>
            <person name="Petit M.A."/>
            <person name="Pichon C."/>
            <person name="Rouy Z."/>
            <person name="Ruf C.S."/>
            <person name="Schneider D."/>
            <person name="Tourret J."/>
            <person name="Vacherie B."/>
            <person name="Vallenet D."/>
            <person name="Medigue C."/>
            <person name="Rocha E.P.C."/>
            <person name="Denamur E."/>
        </authorList>
    </citation>
    <scope>NUCLEOTIDE SEQUENCE [LARGE SCALE GENOMIC DNA]</scope>
    <source>
        <strain>UMN026 / ExPEC</strain>
    </source>
</reference>
<name>KBAZ_ECOLU</name>
<dbReference type="EMBL" id="CU928163">
    <property type="protein sequence ID" value="CAR14768.1"/>
    <property type="molecule type" value="Genomic_DNA"/>
</dbReference>
<dbReference type="RefSeq" id="WP_000681943.1">
    <property type="nucleotide sequence ID" value="NC_011751.1"/>
</dbReference>
<dbReference type="RefSeq" id="YP_002414273.1">
    <property type="nucleotide sequence ID" value="NC_011751.1"/>
</dbReference>
<dbReference type="SMR" id="B7NDB8"/>
<dbReference type="STRING" id="585056.ECUMN_3614"/>
<dbReference type="KEGG" id="eum:ECUMN_3614"/>
<dbReference type="PATRIC" id="fig|585056.7.peg.3794"/>
<dbReference type="HOGENOM" id="CLU_053334_0_0_6"/>
<dbReference type="UniPathway" id="UPA00704">
    <property type="reaction ID" value="UER00716"/>
</dbReference>
<dbReference type="Proteomes" id="UP000007097">
    <property type="component" value="Chromosome"/>
</dbReference>
<dbReference type="GO" id="GO:0005886">
    <property type="term" value="C:plasma membrane"/>
    <property type="evidence" value="ECO:0007669"/>
    <property type="project" value="TreeGrafter"/>
</dbReference>
<dbReference type="GO" id="GO:0005975">
    <property type="term" value="P:carbohydrate metabolic process"/>
    <property type="evidence" value="ECO:0007669"/>
    <property type="project" value="InterPro"/>
</dbReference>
<dbReference type="GO" id="GO:2001059">
    <property type="term" value="P:D-tagatose 6-phosphate catabolic process"/>
    <property type="evidence" value="ECO:0007669"/>
    <property type="project" value="UniProtKB-UniRule"/>
</dbReference>
<dbReference type="GO" id="GO:0009401">
    <property type="term" value="P:phosphoenolpyruvate-dependent sugar phosphotransferase system"/>
    <property type="evidence" value="ECO:0007669"/>
    <property type="project" value="TreeGrafter"/>
</dbReference>
<dbReference type="Gene3D" id="3.20.20.70">
    <property type="entry name" value="Aldolase class I"/>
    <property type="match status" value="1"/>
</dbReference>
<dbReference type="Gene3D" id="1.10.400.20">
    <property type="entry name" value="putative tagatose 6-phosphate kinase domain like"/>
    <property type="match status" value="1"/>
</dbReference>
<dbReference type="HAMAP" id="MF_01295">
    <property type="entry name" value="Tagatose_aldol_KbaZ"/>
    <property type="match status" value="1"/>
</dbReference>
<dbReference type="InterPro" id="IPR013785">
    <property type="entry name" value="Aldolase_TIM"/>
</dbReference>
<dbReference type="InterPro" id="IPR012062">
    <property type="entry name" value="GatZ/KbaZ-like"/>
</dbReference>
<dbReference type="InterPro" id="IPR050303">
    <property type="entry name" value="GatZ_KbaZ_carbometab"/>
</dbReference>
<dbReference type="InterPro" id="IPR023435">
    <property type="entry name" value="TagBP_ald_KbaZ"/>
</dbReference>
<dbReference type="NCBIfam" id="TIGR02810">
    <property type="entry name" value="agaZ_gatZ"/>
    <property type="match status" value="1"/>
</dbReference>
<dbReference type="NCBIfam" id="NF012002">
    <property type="entry name" value="PRK15458.1"/>
    <property type="match status" value="1"/>
</dbReference>
<dbReference type="PANTHER" id="PTHR32502:SF2">
    <property type="entry name" value="D-TAGATOSE-1,6-BISPHOSPHATE ALDOLASE SUBUNIT KBAZ"/>
    <property type="match status" value="1"/>
</dbReference>
<dbReference type="PANTHER" id="PTHR32502">
    <property type="entry name" value="N-ACETYLGALACTOSAMINE PERMEASE II COMPONENT-RELATED"/>
    <property type="match status" value="1"/>
</dbReference>
<dbReference type="Pfam" id="PF08013">
    <property type="entry name" value="GatZ_KbaZ-like"/>
    <property type="match status" value="1"/>
</dbReference>
<dbReference type="PIRSF" id="PIRSF009264">
    <property type="entry name" value="TagBP_ald_AgaZ"/>
    <property type="match status" value="1"/>
</dbReference>
<dbReference type="SUPFAM" id="SSF51569">
    <property type="entry name" value="Aldolase"/>
    <property type="match status" value="1"/>
</dbReference>
<gene>
    <name evidence="1" type="primary">kbaZ</name>
    <name type="ordered locus">ECUMN_3614</name>
</gene>
<accession>B7NDB8</accession>
<feature type="chain" id="PRO_0000372534" description="D-tagatose-1,6-bisphosphate aldolase subunit KbaZ">
    <location>
        <begin position="1"/>
        <end position="426"/>
    </location>
</feature>
<evidence type="ECO:0000255" key="1">
    <source>
        <dbReference type="HAMAP-Rule" id="MF_01295"/>
    </source>
</evidence>
<protein>
    <recommendedName>
        <fullName evidence="1">D-tagatose-1,6-bisphosphate aldolase subunit KbaZ</fullName>
    </recommendedName>
</protein>
<proteinExistence type="inferred from homology"/>
<organism>
    <name type="scientific">Escherichia coli O17:K52:H18 (strain UMN026 / ExPEC)</name>
    <dbReference type="NCBI Taxonomy" id="585056"/>
    <lineage>
        <taxon>Bacteria</taxon>
        <taxon>Pseudomonadati</taxon>
        <taxon>Pseudomonadota</taxon>
        <taxon>Gammaproteobacteria</taxon>
        <taxon>Enterobacterales</taxon>
        <taxon>Enterobacteriaceae</taxon>
        <taxon>Escherichia</taxon>
    </lineage>
</organism>
<sequence>MKHLTEMVRQHKAGKTNGIYAVCSAHPLVLEAAIRYASANQTPLLIEATSNQVDQFGGYTGMTPADFRGFVCQLADSLNFPQDALILGGDHLGPNRWQNLPAAQAMANADDLIKSYVAAGFKKIHLDCSMSCQDDPVPLTDDIVAERAARLAKVAEETCREHFGEADLVYVIGTEVPVPGGAHETLSELAVTTPDAARATLEAHRHAFEKQGLSAIWPRIIALVVQPGVEFDHTNVIDYQPVKATALSQMVENYETLIFEAHSTDYQTPQSLRQLVIDHFAILKVGPALTFALREALFSLAAIEEELVPAKACSGLRQVLENVMLDRPEYWQSHYHGDGNARRLARGYSYSDRVRYYWPDSQIDDAFAHLVRNLADSPIPLPLISQYLPLQYVKVRSGELQPTPRELIINHIQDILAQYHTACEGQ</sequence>
<comment type="function">
    <text evidence="1">Component of the tagatose-1,6-bisphosphate aldolase KbaYZ that is required for full activity and stability of the Y subunit. Could have a chaperone-like function for the proper and stable folding of KbaY. When expressed alone, KbaZ does not show any aldolase activity.</text>
</comment>
<comment type="pathway">
    <text evidence="1">Carbohydrate metabolism; D-tagatose 6-phosphate degradation; D-glyceraldehyde 3-phosphate and glycerone phosphate from D-tagatose 6-phosphate: step 2/2.</text>
</comment>
<comment type="subunit">
    <text evidence="1">Forms a complex with KbaY.</text>
</comment>
<comment type="similarity">
    <text evidence="1">Belongs to the GatZ/KbaZ family. KbaZ subfamily.</text>
</comment>